<evidence type="ECO:0000250" key="1"/>
<evidence type="ECO:0000269" key="2">
    <source>
    </source>
</evidence>
<evidence type="ECO:0000305" key="3"/>
<evidence type="ECO:0007829" key="4">
    <source>
        <dbReference type="PDB" id="3TSR"/>
    </source>
</evidence>
<dbReference type="EC" id="4.6.1.18"/>
<dbReference type="EMBL" id="M27814">
    <property type="protein sequence ID" value="AAA40060.1"/>
    <property type="molecule type" value="mRNA"/>
</dbReference>
<dbReference type="EMBL" id="X60103">
    <property type="protein sequence ID" value="CAA42697.1"/>
    <property type="molecule type" value="Genomic_DNA"/>
</dbReference>
<dbReference type="CCDS" id="CCDS27038.1"/>
<dbReference type="PIR" id="A34090">
    <property type="entry name" value="NRMS"/>
</dbReference>
<dbReference type="PDB" id="3TSR">
    <property type="method" value="X-ray"/>
    <property type="resolution" value="2.20 A"/>
    <property type="chains" value="A/B/C/D=26-149"/>
</dbReference>
<dbReference type="PDBsum" id="3TSR"/>
<dbReference type="SMR" id="P00683"/>
<dbReference type="FunCoup" id="P00683">
    <property type="interactions" value="5"/>
</dbReference>
<dbReference type="STRING" id="10090.ENSMUSP00000079025"/>
<dbReference type="PhosphoSitePlus" id="P00683"/>
<dbReference type="PaxDb" id="10090-ENSMUSP00000079025"/>
<dbReference type="PeptideAtlas" id="P00683"/>
<dbReference type="ProteomicsDB" id="300453"/>
<dbReference type="AGR" id="MGI:97919"/>
<dbReference type="MGI" id="MGI:97919">
    <property type="gene designation" value="Rnase1"/>
</dbReference>
<dbReference type="eggNOG" id="ENOG502SQ4K">
    <property type="taxonomic scope" value="Eukaryota"/>
</dbReference>
<dbReference type="InParanoid" id="P00683"/>
<dbReference type="PhylomeDB" id="P00683"/>
<dbReference type="ChiTaRS" id="Rnase1">
    <property type="organism name" value="mouse"/>
</dbReference>
<dbReference type="EvolutionaryTrace" id="P00683"/>
<dbReference type="PRO" id="PR:P00683"/>
<dbReference type="Proteomes" id="UP000000589">
    <property type="component" value="Unplaced"/>
</dbReference>
<dbReference type="RNAct" id="P00683">
    <property type="molecule type" value="protein"/>
</dbReference>
<dbReference type="GO" id="GO:0005576">
    <property type="term" value="C:extracellular region"/>
    <property type="evidence" value="ECO:0007669"/>
    <property type="project" value="UniProtKB-SubCell"/>
</dbReference>
<dbReference type="GO" id="GO:0016829">
    <property type="term" value="F:lyase activity"/>
    <property type="evidence" value="ECO:0007669"/>
    <property type="project" value="UniProtKB-KW"/>
</dbReference>
<dbReference type="GO" id="GO:0003676">
    <property type="term" value="F:nucleic acid binding"/>
    <property type="evidence" value="ECO:0007669"/>
    <property type="project" value="InterPro"/>
</dbReference>
<dbReference type="GO" id="GO:0004522">
    <property type="term" value="F:ribonuclease A activity"/>
    <property type="evidence" value="ECO:0007669"/>
    <property type="project" value="UniProtKB-EC"/>
</dbReference>
<dbReference type="GO" id="GO:0009617">
    <property type="term" value="P:response to bacterium"/>
    <property type="evidence" value="ECO:0000270"/>
    <property type="project" value="MGI"/>
</dbReference>
<dbReference type="CDD" id="cd06265">
    <property type="entry name" value="RNase_A_canonical"/>
    <property type="match status" value="1"/>
</dbReference>
<dbReference type="FunFam" id="3.10.130.10:FF:000001">
    <property type="entry name" value="Ribonuclease pancreatic"/>
    <property type="match status" value="1"/>
</dbReference>
<dbReference type="Gene3D" id="3.10.130.10">
    <property type="entry name" value="Ribonuclease A-like domain"/>
    <property type="match status" value="1"/>
</dbReference>
<dbReference type="InterPro" id="IPR001427">
    <property type="entry name" value="RNaseA"/>
</dbReference>
<dbReference type="InterPro" id="IPR036816">
    <property type="entry name" value="RNaseA-like_dom_sf"/>
</dbReference>
<dbReference type="InterPro" id="IPR023411">
    <property type="entry name" value="RNaseA_AS"/>
</dbReference>
<dbReference type="InterPro" id="IPR023412">
    <property type="entry name" value="RNaseA_domain"/>
</dbReference>
<dbReference type="PANTHER" id="PTHR11437">
    <property type="entry name" value="RIBONUCLEASE"/>
    <property type="match status" value="1"/>
</dbReference>
<dbReference type="PANTHER" id="PTHR11437:SF24">
    <property type="entry name" value="RIBONUCLEASE PANCREATIC"/>
    <property type="match status" value="1"/>
</dbReference>
<dbReference type="Pfam" id="PF00074">
    <property type="entry name" value="RnaseA"/>
    <property type="match status" value="1"/>
</dbReference>
<dbReference type="PRINTS" id="PR00794">
    <property type="entry name" value="RIBONUCLEASE"/>
</dbReference>
<dbReference type="SMART" id="SM00092">
    <property type="entry name" value="RNAse_Pc"/>
    <property type="match status" value="1"/>
</dbReference>
<dbReference type="SUPFAM" id="SSF54076">
    <property type="entry name" value="RNase A-like"/>
    <property type="match status" value="1"/>
</dbReference>
<dbReference type="PROSITE" id="PS00127">
    <property type="entry name" value="RNASE_PANCREATIC"/>
    <property type="match status" value="1"/>
</dbReference>
<protein>
    <recommendedName>
        <fullName>Ribonuclease pancreatic</fullName>
        <ecNumber>4.6.1.18</ecNumber>
    </recommendedName>
    <alternativeName>
        <fullName>RNase 1</fullName>
    </alternativeName>
    <alternativeName>
        <fullName>RNase A</fullName>
    </alternativeName>
</protein>
<proteinExistence type="evidence at protein level"/>
<sequence>MGLEKSLILFPLFFLLLGWVQPSLGRESAAQKFQRQHMDPDGSSINSPTYCNQMMKRRDMTNGSCKPVNTFVHEPLADVQAVCSQENVTCKNRKSNCYKSSSALHITDCHLKGNSKYPNCDYKTTQYQKHIIVACEGNPYVPVHFDATV</sequence>
<name>RNAS1_MOUSE</name>
<reference key="1">
    <citation type="journal article" date="1990" name="Mol. Biol. Evol.">
        <title>Evolution of nucleic acids coding for ribonucleases: the mRNA sequence of mouse pancreatic ribonuclease.</title>
        <authorList>
            <person name="Schueller C."/>
            <person name="Nijssen H.M.J."/>
            <person name="Kok R."/>
            <person name="Beintema J.J."/>
        </authorList>
    </citation>
    <scope>NUCLEOTIDE SEQUENCE [MRNA]</scope>
</reference>
<reference key="2">
    <citation type="journal article" date="1991" name="Nucleic Acids Res.">
        <title>Isolation of the murine ribonuclease gene Rib-1: structure and tissue specific expression in pancreas and parotid gland.</title>
        <authorList>
            <person name="Samuelson L.C."/>
            <person name="Wiebauer K."/>
            <person name="Howard G."/>
            <person name="Schmid R.M."/>
            <person name="Koeplin D."/>
            <person name="Meisler M.H."/>
        </authorList>
    </citation>
    <scope>NUCLEOTIDE SEQUENCE [GENOMIC DNA]</scope>
    <source>
        <strain>C3H/HeJ</strain>
        <tissue>Spleen</tissue>
    </source>
</reference>
<reference key="3">
    <citation type="journal article" date="1979" name="Eur. J. Biochem.">
        <title>The amino acid sequence of mouse pancreatic ribonuclease. Extremely rapid evolutionary rates of the myomorph rodent ribonucleases.</title>
        <authorList>
            <person name="Lenstra J.A."/>
            <person name="Beintema J.J."/>
        </authorList>
    </citation>
    <scope>PROTEIN SEQUENCE OF 26-149</scope>
    <source>
        <tissue>Pancreas</tissue>
    </source>
</reference>
<reference key="4">
    <citation type="journal article" date="2010" name="Cell">
        <title>A tissue-specific atlas of mouse protein phosphorylation and expression.</title>
        <authorList>
            <person name="Huttlin E.L."/>
            <person name="Jedrychowski M.P."/>
            <person name="Elias J.E."/>
            <person name="Goswami T."/>
            <person name="Rad R."/>
            <person name="Beausoleil S.A."/>
            <person name="Villen J."/>
            <person name="Haas W."/>
            <person name="Sowa M.E."/>
            <person name="Gygi S.P."/>
        </authorList>
    </citation>
    <scope>IDENTIFICATION BY MASS SPECTROMETRY [LARGE SCALE ANALYSIS]</scope>
    <source>
        <tissue>Pancreas</tissue>
        <tissue>Spleen</tissue>
    </source>
</reference>
<accession>P00683</accession>
<keyword id="KW-0002">3D-structure</keyword>
<keyword id="KW-0903">Direct protein sequencing</keyword>
<keyword id="KW-1015">Disulfide bond</keyword>
<keyword id="KW-0255">Endonuclease</keyword>
<keyword id="KW-0378">Hydrolase</keyword>
<keyword id="KW-0456">Lyase</keyword>
<keyword id="KW-0540">Nuclease</keyword>
<keyword id="KW-1185">Reference proteome</keyword>
<keyword id="KW-0964">Secreted</keyword>
<keyword id="KW-0732">Signal</keyword>
<gene>
    <name type="primary">Rnase1</name>
    <name type="synonym">Rib-1</name>
    <name type="synonym">Rib1</name>
    <name type="synonym">Rns1</name>
</gene>
<comment type="function">
    <text evidence="1">Endonuclease that catalyzes the cleavage of RNA on the 3' side of pyrimidine nucleotides. Acts on single-stranded and double-stranded RNA (By similarity).</text>
</comment>
<comment type="catalytic activity">
    <reaction>
        <text>an [RNA] containing cytidine + H2O = an [RNA]-3'-cytidine-3'-phosphate + a 5'-hydroxy-ribonucleotide-3'-[RNA].</text>
        <dbReference type="EC" id="4.6.1.18"/>
    </reaction>
</comment>
<comment type="catalytic activity">
    <reaction>
        <text>an [RNA] containing uridine + H2O = an [RNA]-3'-uridine-3'-phosphate + a 5'-hydroxy-ribonucleotide-3'-[RNA].</text>
        <dbReference type="EC" id="4.6.1.18"/>
    </reaction>
</comment>
<comment type="subunit">
    <text evidence="1">Monomer. Interacts with and forms tight 1:1 complexes with RNH1. Dimerization of two such complexes may occur. Interaction with RNH1 inhibits this protein (By similarity).</text>
</comment>
<comment type="subcellular location">
    <subcellularLocation>
        <location>Secreted</location>
    </subcellularLocation>
</comment>
<comment type="tissue specificity">
    <text>Pancreas.</text>
</comment>
<comment type="similarity">
    <text evidence="3">Belongs to the pancreatic ribonuclease family.</text>
</comment>
<feature type="signal peptide" evidence="2">
    <location>
        <begin position="1"/>
        <end position="25"/>
    </location>
</feature>
<feature type="chain" id="PRO_0000030929" description="Ribonuclease pancreatic">
    <location>
        <begin position="26"/>
        <end position="149"/>
    </location>
</feature>
<feature type="active site" description="Proton acceptor" evidence="1">
    <location>
        <position position="37"/>
    </location>
</feature>
<feature type="active site" description="Proton donor" evidence="1">
    <location>
        <position position="144"/>
    </location>
</feature>
<feature type="binding site" evidence="1">
    <location>
        <position position="32"/>
    </location>
    <ligand>
        <name>substrate</name>
    </ligand>
</feature>
<feature type="binding site" evidence="1">
    <location>
        <position position="35"/>
    </location>
    <ligand>
        <name>substrate</name>
    </ligand>
</feature>
<feature type="binding site" evidence="1">
    <location>
        <begin position="66"/>
        <end position="70"/>
    </location>
    <ligand>
        <name>substrate</name>
    </ligand>
</feature>
<feature type="binding site" evidence="1">
    <location>
        <position position="91"/>
    </location>
    <ligand>
        <name>substrate</name>
    </ligand>
</feature>
<feature type="disulfide bond" evidence="1">
    <location>
        <begin position="51"/>
        <end position="109"/>
    </location>
</feature>
<feature type="disulfide bond" evidence="1">
    <location>
        <begin position="65"/>
        <end position="120"/>
    </location>
</feature>
<feature type="disulfide bond" evidence="1">
    <location>
        <begin position="83"/>
        <end position="135"/>
    </location>
</feature>
<feature type="disulfide bond" evidence="1">
    <location>
        <begin position="90"/>
        <end position="97"/>
    </location>
</feature>
<feature type="helix" evidence="4">
    <location>
        <begin position="29"/>
        <end position="37"/>
    </location>
</feature>
<feature type="helix" evidence="4">
    <location>
        <begin position="50"/>
        <end position="57"/>
    </location>
</feature>
<feature type="strand" evidence="4">
    <location>
        <begin position="61"/>
        <end position="64"/>
    </location>
</feature>
<feature type="strand" evidence="4">
    <location>
        <begin position="67"/>
        <end position="72"/>
    </location>
</feature>
<feature type="helix" evidence="4">
    <location>
        <begin position="76"/>
        <end position="80"/>
    </location>
</feature>
<feature type="helix" evidence="4">
    <location>
        <begin position="81"/>
        <end position="84"/>
    </location>
</feature>
<feature type="strand" evidence="4">
    <location>
        <begin position="85"/>
        <end position="88"/>
    </location>
</feature>
<feature type="strand" evidence="4">
    <location>
        <begin position="97"/>
        <end position="99"/>
    </location>
</feature>
<feature type="strand" evidence="4">
    <location>
        <begin position="104"/>
        <end position="111"/>
    </location>
</feature>
<feature type="strand" evidence="4">
    <location>
        <begin position="122"/>
        <end position="136"/>
    </location>
</feature>
<feature type="turn" evidence="4">
    <location>
        <begin position="137"/>
        <end position="140"/>
    </location>
</feature>
<feature type="strand" evidence="4">
    <location>
        <begin position="141"/>
        <end position="149"/>
    </location>
</feature>
<organism>
    <name type="scientific">Mus musculus</name>
    <name type="common">Mouse</name>
    <dbReference type="NCBI Taxonomy" id="10090"/>
    <lineage>
        <taxon>Eukaryota</taxon>
        <taxon>Metazoa</taxon>
        <taxon>Chordata</taxon>
        <taxon>Craniata</taxon>
        <taxon>Vertebrata</taxon>
        <taxon>Euteleostomi</taxon>
        <taxon>Mammalia</taxon>
        <taxon>Eutheria</taxon>
        <taxon>Euarchontoglires</taxon>
        <taxon>Glires</taxon>
        <taxon>Rodentia</taxon>
        <taxon>Myomorpha</taxon>
        <taxon>Muroidea</taxon>
        <taxon>Muridae</taxon>
        <taxon>Murinae</taxon>
        <taxon>Mus</taxon>
        <taxon>Mus</taxon>
    </lineage>
</organism>